<comment type="function">
    <text>Hemocyanins are copper-containing oxygen carriers occurring freely dissolved in the hemolymph of many mollusks and arthropods.</text>
</comment>
<comment type="subunit">
    <text>Scorpion hemocyanin is a 24-chain polymer with 8 different chains identified, assembled in hexameric substructures.</text>
</comment>
<comment type="subcellular location">
    <subcellularLocation>
        <location>Secreted</location>
        <location>Extracellular space</location>
    </subcellularLocation>
</comment>
<comment type="tissue specificity">
    <text>Hemolymph.</text>
</comment>
<comment type="PTM">
    <text>Three disulfide bonds are present.</text>
</comment>
<comment type="mass spectrometry" mass="71890.0" error="7.0" method="Electrospray" evidence="1"/>
<comment type="miscellaneous">
    <text>The two copper ions bound each have 3 nitrogen ligands (presumably contributed by His residues) and share a bridging ligand (possibly contributed by a Tyr residue) in addition to binding oxygen.</text>
</comment>
<comment type="similarity">
    <text evidence="2">Belongs to the tyrosinase family. Hemocyanin subfamily.</text>
</comment>
<keyword id="KW-0002">3D-structure</keyword>
<keyword id="KW-0186">Copper</keyword>
<keyword id="KW-0903">Direct protein sequencing</keyword>
<keyword id="KW-1015">Disulfide bond</keyword>
<keyword id="KW-0479">Metal-binding</keyword>
<keyword id="KW-0561">Oxygen transport</keyword>
<keyword id="KW-0597">Phosphoprotein</keyword>
<keyword id="KW-0964">Secreted</keyword>
<keyword id="KW-0813">Transport</keyword>
<sequence length="626" mass="71786">TVADKQARLMPLFKHLTALTREKLPLDQRDERLKGVGILPRGTLFSCFHARHLAEATELYVALYGAKDFNDFIHLCEQARQIVNEGMFVYAVSVAVLHREDCKGITVPPIQEVFPDRFVPAETINRANKEASNHPDQQSIVVEAEETGNILDPEYKLSYFREDIGINAHHWHWHIVYPATWNPTVMGKEKDRKGELFFYMHQQMCARYDSERLSNGLQRMIPFHNFDEPLEGYAPHLTSLVSGLQYASRPEGYSIHDLSDVDVQDMVRWRERILDAINMHYIVDKDNNKIPLDIEHGTDILGDIIESSDESKNVEYYGSLHNWGHVMMANITDPDHRFQENPGVMSDTSTSLRDPIFYRWHRFIDNIFQEHKKSFHPYTKEELSFPGVEVVGVSINSKTANVITTLIKESLLELSHGINFGTDQSVKVKYHHLDHEPFTYNIVVENNSGAEKHSTVRIFLAPKYDELNNKLEPDEQRRLFIELDKFFYTLTPGKNTIVRNHQDSSVTISKVRTFDQLGAGEGVSEDSTEYCSCGWPEHMLIPRGSHKGMEFELFVMLTDHDEDTVAGLSENAVCSDAVSYCGARDDRYPDKKAMGFPFDRKIEARTAAEFLTPNMGLTDIKIKFHG</sequence>
<proteinExistence type="evidence at protein level"/>
<reference key="1">
    <citation type="journal article" date="1995" name="Eur. J. Biochem.">
        <title>Complete amino acid sequence of the Aa6 subunit of the scorpion Androctonus australis hemocyanin determined by Edman degradation and mass spectrometry.</title>
        <authorList>
            <person name="Buzy A."/>
            <person name="Gagnon J."/>
            <person name="Lamy J."/>
            <person name="Thibault P."/>
            <person name="Forest E."/>
            <person name="Hudry-Clergeon G."/>
        </authorList>
    </citation>
    <scope>PROTEIN SEQUENCE</scope>
    <scope>MASS SPECTROMETRY</scope>
    <source>
        <strain>Hector</strain>
        <tissue>Hemolymph</tissue>
    </source>
</reference>
<accession>P80476</accession>
<dbReference type="PIR" id="S67964">
    <property type="entry name" value="S67964"/>
</dbReference>
<dbReference type="PDB" id="3IXV">
    <property type="method" value="EM"/>
    <property type="resolution" value="6.80 A"/>
    <property type="chains" value="A/C/D/E/F/G/H/I/J/K/L/M=1-626"/>
</dbReference>
<dbReference type="PDB" id="3IXW">
    <property type="method" value="EM"/>
    <property type="resolution" value="8.00 A"/>
    <property type="chains" value="A/C/D/E/F/G/H/I/J/K/L/M=1-626"/>
</dbReference>
<dbReference type="PDBsum" id="3IXV"/>
<dbReference type="PDBsum" id="3IXW"/>
<dbReference type="SMR" id="P80476"/>
<dbReference type="EvolutionaryTrace" id="P80476"/>
<dbReference type="GO" id="GO:0005576">
    <property type="term" value="C:extracellular region"/>
    <property type="evidence" value="ECO:0007669"/>
    <property type="project" value="UniProtKB-SubCell"/>
</dbReference>
<dbReference type="GO" id="GO:0031404">
    <property type="term" value="F:chloride ion binding"/>
    <property type="evidence" value="ECO:0000250"/>
    <property type="project" value="UniProtKB"/>
</dbReference>
<dbReference type="GO" id="GO:0005507">
    <property type="term" value="F:copper ion binding"/>
    <property type="evidence" value="ECO:0000250"/>
    <property type="project" value="UniProtKB"/>
</dbReference>
<dbReference type="GO" id="GO:0016491">
    <property type="term" value="F:oxidoreductase activity"/>
    <property type="evidence" value="ECO:0007669"/>
    <property type="project" value="InterPro"/>
</dbReference>
<dbReference type="GO" id="GO:0005344">
    <property type="term" value="F:oxygen carrier activity"/>
    <property type="evidence" value="ECO:0007669"/>
    <property type="project" value="UniProtKB-KW"/>
</dbReference>
<dbReference type="FunFam" id="1.10.1280.10:FF:000004">
    <property type="entry name" value="Hemocyanin subunit 2"/>
    <property type="match status" value="1"/>
</dbReference>
<dbReference type="FunFam" id="2.60.40.1520:FF:000001">
    <property type="entry name" value="Hemocyanin subunit 2"/>
    <property type="match status" value="1"/>
</dbReference>
<dbReference type="FunFam" id="1.20.1370.10:FF:000002">
    <property type="entry name" value="Hemocyanin subunit B"/>
    <property type="match status" value="1"/>
</dbReference>
<dbReference type="Gene3D" id="1.10.1280.10">
    <property type="entry name" value="Di-copper center containing domain from catechol oxidase"/>
    <property type="match status" value="1"/>
</dbReference>
<dbReference type="Gene3D" id="2.60.40.1520">
    <property type="entry name" value="Hemocyanin, C-terminal domain"/>
    <property type="match status" value="1"/>
</dbReference>
<dbReference type="Gene3D" id="1.20.1370.10">
    <property type="entry name" value="Hemocyanin, N-terminal domain"/>
    <property type="match status" value="1"/>
</dbReference>
<dbReference type="InterPro" id="IPR008922">
    <property type="entry name" value="Di-copper_centre_dom_sf"/>
</dbReference>
<dbReference type="InterPro" id="IPR013788">
    <property type="entry name" value="Hemocyanin/hexamerin"/>
</dbReference>
<dbReference type="InterPro" id="IPR000896">
    <property type="entry name" value="Hemocyanin/hexamerin_mid_dom"/>
</dbReference>
<dbReference type="InterPro" id="IPR005203">
    <property type="entry name" value="Hemocyanin_C"/>
</dbReference>
<dbReference type="InterPro" id="IPR037020">
    <property type="entry name" value="Hemocyanin_C_sf"/>
</dbReference>
<dbReference type="InterPro" id="IPR005204">
    <property type="entry name" value="Hemocyanin_N"/>
</dbReference>
<dbReference type="InterPro" id="IPR036697">
    <property type="entry name" value="Hemocyanin_N_sf"/>
</dbReference>
<dbReference type="InterPro" id="IPR014756">
    <property type="entry name" value="Ig_E-set"/>
</dbReference>
<dbReference type="InterPro" id="IPR002227">
    <property type="entry name" value="Tyrosinase_Cu-bd"/>
</dbReference>
<dbReference type="PANTHER" id="PTHR11511">
    <property type="entry name" value="LARVAL STORAGE PROTEIN/PHENOLOXIDASE"/>
    <property type="match status" value="1"/>
</dbReference>
<dbReference type="PANTHER" id="PTHR11511:SF4">
    <property type="entry name" value="PHENOLOXIDASE 2-RELATED"/>
    <property type="match status" value="1"/>
</dbReference>
<dbReference type="Pfam" id="PF03723">
    <property type="entry name" value="Hemocyanin_C"/>
    <property type="match status" value="1"/>
</dbReference>
<dbReference type="Pfam" id="PF00372">
    <property type="entry name" value="Hemocyanin_M"/>
    <property type="match status" value="1"/>
</dbReference>
<dbReference type="Pfam" id="PF03722">
    <property type="entry name" value="Hemocyanin_N"/>
    <property type="match status" value="1"/>
</dbReference>
<dbReference type="PRINTS" id="PR00187">
    <property type="entry name" value="HAEMOCYANIN"/>
</dbReference>
<dbReference type="SUPFAM" id="SSF48056">
    <property type="entry name" value="Di-copper centre-containing domain"/>
    <property type="match status" value="1"/>
</dbReference>
<dbReference type="SUPFAM" id="SSF81296">
    <property type="entry name" value="E set domains"/>
    <property type="match status" value="1"/>
</dbReference>
<dbReference type="SUPFAM" id="SSF48050">
    <property type="entry name" value="Hemocyanin, N-terminal domain"/>
    <property type="match status" value="1"/>
</dbReference>
<dbReference type="PROSITE" id="PS00209">
    <property type="entry name" value="HEMOCYANIN_1"/>
    <property type="match status" value="1"/>
</dbReference>
<dbReference type="PROSITE" id="PS00210">
    <property type="entry name" value="HEMOCYANIN_2"/>
    <property type="match status" value="1"/>
</dbReference>
<dbReference type="PROSITE" id="PS00498">
    <property type="entry name" value="TYROSINASE_2"/>
    <property type="match status" value="1"/>
</dbReference>
<organism>
    <name type="scientific">Androctonus australis</name>
    <name type="common">Sahara scorpion</name>
    <dbReference type="NCBI Taxonomy" id="6858"/>
    <lineage>
        <taxon>Eukaryota</taxon>
        <taxon>Metazoa</taxon>
        <taxon>Ecdysozoa</taxon>
        <taxon>Arthropoda</taxon>
        <taxon>Chelicerata</taxon>
        <taxon>Arachnida</taxon>
        <taxon>Scorpiones</taxon>
        <taxon>Buthida</taxon>
        <taxon>Buthoidea</taxon>
        <taxon>Buthidae</taxon>
        <taxon>Androctonus</taxon>
    </lineage>
</organism>
<feature type="chain" id="PRO_0000204253" description="Hemocyanin AA6 chain">
    <location>
        <begin position="1"/>
        <end position="626"/>
    </location>
</feature>
<feature type="binding site" evidence="2">
    <location>
        <position position="170"/>
    </location>
    <ligand>
        <name>Cu cation</name>
        <dbReference type="ChEBI" id="CHEBI:23378"/>
        <label>1</label>
    </ligand>
</feature>
<feature type="binding site" evidence="2">
    <location>
        <position position="174"/>
    </location>
    <ligand>
        <name>Cu cation</name>
        <dbReference type="ChEBI" id="CHEBI:23378"/>
        <label>1</label>
    </ligand>
</feature>
<feature type="binding site" evidence="2">
    <location>
        <position position="201"/>
    </location>
    <ligand>
        <name>Cu cation</name>
        <dbReference type="ChEBI" id="CHEBI:23378"/>
        <label>1</label>
    </ligand>
</feature>
<feature type="binding site" evidence="2">
    <location>
        <position position="321"/>
    </location>
    <ligand>
        <name>Cu cation</name>
        <dbReference type="ChEBI" id="CHEBI:23378"/>
        <label>2</label>
    </ligand>
</feature>
<feature type="binding site" evidence="2">
    <location>
        <position position="325"/>
    </location>
    <ligand>
        <name>Cu cation</name>
        <dbReference type="ChEBI" id="CHEBI:23378"/>
        <label>2</label>
    </ligand>
</feature>
<feature type="binding site" evidence="2">
    <location>
        <position position="361"/>
    </location>
    <ligand>
        <name>Cu cation</name>
        <dbReference type="ChEBI" id="CHEBI:23378"/>
        <label>2</label>
    </ligand>
</feature>
<feature type="modified residue" description="Phosphoserine" evidence="2">
    <location>
        <position position="374"/>
    </location>
</feature>
<protein>
    <recommendedName>
        <fullName>Hemocyanin AA6 chain</fullName>
    </recommendedName>
</protein>
<name>HCY6_ANDAU</name>
<evidence type="ECO:0000269" key="1">
    <source>
    </source>
</evidence>
<evidence type="ECO:0000305" key="2"/>